<proteinExistence type="inferred from homology"/>
<dbReference type="EC" id="3.6.4.-" evidence="1"/>
<dbReference type="EMBL" id="CP000970">
    <property type="protein sequence ID" value="ACB17414.1"/>
    <property type="molecule type" value="Genomic_DNA"/>
</dbReference>
<dbReference type="RefSeq" id="WP_000568522.1">
    <property type="nucleotide sequence ID" value="NC_010498.1"/>
</dbReference>
<dbReference type="SMR" id="B1LD11"/>
<dbReference type="GeneID" id="86860002"/>
<dbReference type="KEGG" id="ecm:EcSMS35_1326"/>
<dbReference type="HOGENOM" id="CLU_055599_1_0_6"/>
<dbReference type="Proteomes" id="UP000007011">
    <property type="component" value="Chromosome"/>
</dbReference>
<dbReference type="GO" id="GO:0005737">
    <property type="term" value="C:cytoplasm"/>
    <property type="evidence" value="ECO:0007669"/>
    <property type="project" value="UniProtKB-SubCell"/>
</dbReference>
<dbReference type="GO" id="GO:0048476">
    <property type="term" value="C:Holliday junction resolvase complex"/>
    <property type="evidence" value="ECO:0007669"/>
    <property type="project" value="UniProtKB-UniRule"/>
</dbReference>
<dbReference type="GO" id="GO:0005524">
    <property type="term" value="F:ATP binding"/>
    <property type="evidence" value="ECO:0007669"/>
    <property type="project" value="UniProtKB-UniRule"/>
</dbReference>
<dbReference type="GO" id="GO:0016887">
    <property type="term" value="F:ATP hydrolysis activity"/>
    <property type="evidence" value="ECO:0007669"/>
    <property type="project" value="InterPro"/>
</dbReference>
<dbReference type="GO" id="GO:0000400">
    <property type="term" value="F:four-way junction DNA binding"/>
    <property type="evidence" value="ECO:0007669"/>
    <property type="project" value="UniProtKB-UniRule"/>
</dbReference>
<dbReference type="GO" id="GO:0009378">
    <property type="term" value="F:four-way junction helicase activity"/>
    <property type="evidence" value="ECO:0007669"/>
    <property type="project" value="InterPro"/>
</dbReference>
<dbReference type="GO" id="GO:0006310">
    <property type="term" value="P:DNA recombination"/>
    <property type="evidence" value="ECO:0007669"/>
    <property type="project" value="UniProtKB-UniRule"/>
</dbReference>
<dbReference type="GO" id="GO:0006281">
    <property type="term" value="P:DNA repair"/>
    <property type="evidence" value="ECO:0007669"/>
    <property type="project" value="UniProtKB-UniRule"/>
</dbReference>
<dbReference type="GO" id="GO:0009432">
    <property type="term" value="P:SOS response"/>
    <property type="evidence" value="ECO:0007669"/>
    <property type="project" value="UniProtKB-UniRule"/>
</dbReference>
<dbReference type="CDD" id="cd00009">
    <property type="entry name" value="AAA"/>
    <property type="match status" value="1"/>
</dbReference>
<dbReference type="FunFam" id="1.10.10.10:FF:000086">
    <property type="entry name" value="Holliday junction ATP-dependent DNA helicase RuvB"/>
    <property type="match status" value="1"/>
</dbReference>
<dbReference type="FunFam" id="1.10.8.60:FF:000023">
    <property type="entry name" value="Holliday junction ATP-dependent DNA helicase RuvB"/>
    <property type="match status" value="1"/>
</dbReference>
<dbReference type="FunFam" id="3.40.50.300:FF:000073">
    <property type="entry name" value="Holliday junction ATP-dependent DNA helicase RuvB"/>
    <property type="match status" value="1"/>
</dbReference>
<dbReference type="Gene3D" id="1.10.8.60">
    <property type="match status" value="1"/>
</dbReference>
<dbReference type="Gene3D" id="3.40.50.300">
    <property type="entry name" value="P-loop containing nucleotide triphosphate hydrolases"/>
    <property type="match status" value="1"/>
</dbReference>
<dbReference type="Gene3D" id="1.10.10.10">
    <property type="entry name" value="Winged helix-like DNA-binding domain superfamily/Winged helix DNA-binding domain"/>
    <property type="match status" value="1"/>
</dbReference>
<dbReference type="HAMAP" id="MF_00016">
    <property type="entry name" value="DNA_HJ_migration_RuvB"/>
    <property type="match status" value="1"/>
</dbReference>
<dbReference type="InterPro" id="IPR003593">
    <property type="entry name" value="AAA+_ATPase"/>
</dbReference>
<dbReference type="InterPro" id="IPR041445">
    <property type="entry name" value="AAA_lid_4"/>
</dbReference>
<dbReference type="InterPro" id="IPR004605">
    <property type="entry name" value="DNA_helicase_Holl-junc_RuvB"/>
</dbReference>
<dbReference type="InterPro" id="IPR027417">
    <property type="entry name" value="P-loop_NTPase"/>
</dbReference>
<dbReference type="InterPro" id="IPR008824">
    <property type="entry name" value="RuvB-like_N"/>
</dbReference>
<dbReference type="InterPro" id="IPR008823">
    <property type="entry name" value="RuvB_C"/>
</dbReference>
<dbReference type="InterPro" id="IPR036388">
    <property type="entry name" value="WH-like_DNA-bd_sf"/>
</dbReference>
<dbReference type="InterPro" id="IPR036390">
    <property type="entry name" value="WH_DNA-bd_sf"/>
</dbReference>
<dbReference type="NCBIfam" id="NF000868">
    <property type="entry name" value="PRK00080.1"/>
    <property type="match status" value="1"/>
</dbReference>
<dbReference type="NCBIfam" id="TIGR00635">
    <property type="entry name" value="ruvB"/>
    <property type="match status" value="1"/>
</dbReference>
<dbReference type="PANTHER" id="PTHR42848">
    <property type="match status" value="1"/>
</dbReference>
<dbReference type="PANTHER" id="PTHR42848:SF1">
    <property type="entry name" value="HOLLIDAY JUNCTION BRANCH MIGRATION COMPLEX SUBUNIT RUVB"/>
    <property type="match status" value="1"/>
</dbReference>
<dbReference type="Pfam" id="PF17864">
    <property type="entry name" value="AAA_lid_4"/>
    <property type="match status" value="1"/>
</dbReference>
<dbReference type="Pfam" id="PF05491">
    <property type="entry name" value="RuvB_C"/>
    <property type="match status" value="1"/>
</dbReference>
<dbReference type="Pfam" id="PF05496">
    <property type="entry name" value="RuvB_N"/>
    <property type="match status" value="1"/>
</dbReference>
<dbReference type="SMART" id="SM00382">
    <property type="entry name" value="AAA"/>
    <property type="match status" value="1"/>
</dbReference>
<dbReference type="SUPFAM" id="SSF52540">
    <property type="entry name" value="P-loop containing nucleoside triphosphate hydrolases"/>
    <property type="match status" value="1"/>
</dbReference>
<dbReference type="SUPFAM" id="SSF46785">
    <property type="entry name" value="Winged helix' DNA-binding domain"/>
    <property type="match status" value="1"/>
</dbReference>
<protein>
    <recommendedName>
        <fullName evidence="1">Holliday junction branch migration complex subunit RuvB</fullName>
        <ecNumber evidence="1">3.6.4.-</ecNumber>
    </recommendedName>
</protein>
<sequence>MIEADRLISAGTTLPEDVADRAIRPKLLEEYVGQPQVRSQMEIFIKAAKLRGDALDHLLIFGPPGLGKTTLANIVANEMGVNLRTTSGPVLEKAGDLAAMLTNLEPHDVLFIDEIHRLSPVVEEVLYPAMEDYQLDIMIGEGPAARSIKIDLPPFTLIGATTRAGSLTSPLRDRFGIVQRLEFYQVPDLQYIVSRSARFMGLEMSDDGALEVARRARGTPRIANRLLRRVRDFAEVKHDGTISADIAAQALDMLNVDAEGFDYMDRKLLLAVIDKFFGGPVGLDNLAAAIGEERETIEDVLEPYLIQQGFLQRTPRGRMATVRAWNHFGITPPEMP</sequence>
<gene>
    <name evidence="1" type="primary">ruvB</name>
    <name type="ordered locus">EcSMS35_1326</name>
</gene>
<accession>B1LD11</accession>
<keyword id="KW-0067">ATP-binding</keyword>
<keyword id="KW-0963">Cytoplasm</keyword>
<keyword id="KW-0227">DNA damage</keyword>
<keyword id="KW-0233">DNA recombination</keyword>
<keyword id="KW-0234">DNA repair</keyword>
<keyword id="KW-0238">DNA-binding</keyword>
<keyword id="KW-0378">Hydrolase</keyword>
<keyword id="KW-0547">Nucleotide-binding</keyword>
<keyword id="KW-0742">SOS response</keyword>
<feature type="chain" id="PRO_1000195219" description="Holliday junction branch migration complex subunit RuvB">
    <location>
        <begin position="1"/>
        <end position="336"/>
    </location>
</feature>
<feature type="region of interest" description="Large ATPase domain (RuvB-L)" evidence="1">
    <location>
        <begin position="4"/>
        <end position="184"/>
    </location>
</feature>
<feature type="region of interest" description="Small ATPAse domain (RuvB-S)" evidence="1">
    <location>
        <begin position="185"/>
        <end position="255"/>
    </location>
</feature>
<feature type="region of interest" description="Head domain (RuvB-H)" evidence="1">
    <location>
        <begin position="258"/>
        <end position="336"/>
    </location>
</feature>
<feature type="binding site" evidence="1">
    <location>
        <position position="23"/>
    </location>
    <ligand>
        <name>ATP</name>
        <dbReference type="ChEBI" id="CHEBI:30616"/>
    </ligand>
</feature>
<feature type="binding site" evidence="1">
    <location>
        <position position="24"/>
    </location>
    <ligand>
        <name>ATP</name>
        <dbReference type="ChEBI" id="CHEBI:30616"/>
    </ligand>
</feature>
<feature type="binding site" evidence="1">
    <location>
        <position position="65"/>
    </location>
    <ligand>
        <name>ATP</name>
        <dbReference type="ChEBI" id="CHEBI:30616"/>
    </ligand>
</feature>
<feature type="binding site" evidence="1">
    <location>
        <position position="68"/>
    </location>
    <ligand>
        <name>ATP</name>
        <dbReference type="ChEBI" id="CHEBI:30616"/>
    </ligand>
</feature>
<feature type="binding site" evidence="1">
    <location>
        <position position="69"/>
    </location>
    <ligand>
        <name>ATP</name>
        <dbReference type="ChEBI" id="CHEBI:30616"/>
    </ligand>
</feature>
<feature type="binding site" evidence="1">
    <location>
        <position position="69"/>
    </location>
    <ligand>
        <name>Mg(2+)</name>
        <dbReference type="ChEBI" id="CHEBI:18420"/>
    </ligand>
</feature>
<feature type="binding site" evidence="1">
    <location>
        <position position="70"/>
    </location>
    <ligand>
        <name>ATP</name>
        <dbReference type="ChEBI" id="CHEBI:30616"/>
    </ligand>
</feature>
<feature type="binding site" evidence="1">
    <location>
        <begin position="131"/>
        <end position="133"/>
    </location>
    <ligand>
        <name>ATP</name>
        <dbReference type="ChEBI" id="CHEBI:30616"/>
    </ligand>
</feature>
<feature type="binding site" evidence="1">
    <location>
        <position position="174"/>
    </location>
    <ligand>
        <name>ATP</name>
        <dbReference type="ChEBI" id="CHEBI:30616"/>
    </ligand>
</feature>
<feature type="binding site" evidence="1">
    <location>
        <position position="184"/>
    </location>
    <ligand>
        <name>ATP</name>
        <dbReference type="ChEBI" id="CHEBI:30616"/>
    </ligand>
</feature>
<feature type="binding site" evidence="1">
    <location>
        <position position="221"/>
    </location>
    <ligand>
        <name>ATP</name>
        <dbReference type="ChEBI" id="CHEBI:30616"/>
    </ligand>
</feature>
<feature type="binding site" evidence="1">
    <location>
        <position position="294"/>
    </location>
    <ligand>
        <name>DNA</name>
        <dbReference type="ChEBI" id="CHEBI:16991"/>
    </ligand>
</feature>
<feature type="binding site" evidence="1">
    <location>
        <position position="313"/>
    </location>
    <ligand>
        <name>DNA</name>
        <dbReference type="ChEBI" id="CHEBI:16991"/>
    </ligand>
</feature>
<feature type="binding site" evidence="1">
    <location>
        <position position="318"/>
    </location>
    <ligand>
        <name>DNA</name>
        <dbReference type="ChEBI" id="CHEBI:16991"/>
    </ligand>
</feature>
<evidence type="ECO:0000255" key="1">
    <source>
        <dbReference type="HAMAP-Rule" id="MF_00016"/>
    </source>
</evidence>
<comment type="function">
    <text evidence="1">The RuvA-RuvB-RuvC complex processes Holliday junction (HJ) DNA during genetic recombination and DNA repair, while the RuvA-RuvB complex plays an important role in the rescue of blocked DNA replication forks via replication fork reversal (RFR). RuvA specifically binds to HJ cruciform DNA, conferring on it an open structure. The RuvB hexamer acts as an ATP-dependent pump, pulling dsDNA into and through the RuvAB complex. RuvB forms 2 homohexamers on either side of HJ DNA bound by 1 or 2 RuvA tetramers; 4 subunits per hexamer contact DNA at a time. Coordinated motions by a converter formed by DNA-disengaged RuvB subunits stimulates ATP hydrolysis and nucleotide exchange. Immobilization of the converter enables RuvB to convert the ATP-contained energy into a lever motion, pulling 2 nucleotides of DNA out of the RuvA tetramer per ATP hydrolyzed, thus driving DNA branch migration. The RuvB motors rotate together with the DNA substrate, which together with the progressing nucleotide cycle form the mechanistic basis for DNA recombination by continuous HJ branch migration. Branch migration allows RuvC to scan DNA until it finds its consensus sequence, where it cleaves and resolves cruciform DNA.</text>
</comment>
<comment type="catalytic activity">
    <reaction evidence="1">
        <text>ATP + H2O = ADP + phosphate + H(+)</text>
        <dbReference type="Rhea" id="RHEA:13065"/>
        <dbReference type="ChEBI" id="CHEBI:15377"/>
        <dbReference type="ChEBI" id="CHEBI:15378"/>
        <dbReference type="ChEBI" id="CHEBI:30616"/>
        <dbReference type="ChEBI" id="CHEBI:43474"/>
        <dbReference type="ChEBI" id="CHEBI:456216"/>
    </reaction>
</comment>
<comment type="subunit">
    <text evidence="1">Homohexamer. Forms an RuvA(8)-RuvB(12)-Holliday junction (HJ) complex. HJ DNA is sandwiched between 2 RuvA tetramers; dsDNA enters through RuvA and exits via RuvB. An RuvB hexamer assembles on each DNA strand where it exits the tetramer. Each RuvB hexamer is contacted by two RuvA subunits (via domain III) on 2 adjacent RuvB subunits; this complex drives branch migration. In the full resolvosome a probable DNA-RuvA(4)-RuvB(12)-RuvC(2) complex forms which resolves the HJ.</text>
</comment>
<comment type="subcellular location">
    <subcellularLocation>
        <location evidence="1">Cytoplasm</location>
    </subcellularLocation>
</comment>
<comment type="domain">
    <text evidence="1">Has 3 domains, the large (RuvB-L) and small ATPase (RuvB-S) domains and the C-terminal head (RuvB-H) domain. The head domain binds DNA, while the ATPase domains jointly bind ATP, ADP or are empty depending on the state of the subunit in the translocation cycle. During a single DNA translocation step the structure of each domain remains the same, but their relative positions change.</text>
</comment>
<comment type="similarity">
    <text evidence="1">Belongs to the RuvB family.</text>
</comment>
<organism>
    <name type="scientific">Escherichia coli (strain SMS-3-5 / SECEC)</name>
    <dbReference type="NCBI Taxonomy" id="439855"/>
    <lineage>
        <taxon>Bacteria</taxon>
        <taxon>Pseudomonadati</taxon>
        <taxon>Pseudomonadota</taxon>
        <taxon>Gammaproteobacteria</taxon>
        <taxon>Enterobacterales</taxon>
        <taxon>Enterobacteriaceae</taxon>
        <taxon>Escherichia</taxon>
    </lineage>
</organism>
<reference key="1">
    <citation type="journal article" date="2008" name="J. Bacteriol.">
        <title>Insights into the environmental resistance gene pool from the genome sequence of the multidrug-resistant environmental isolate Escherichia coli SMS-3-5.</title>
        <authorList>
            <person name="Fricke W.F."/>
            <person name="Wright M.S."/>
            <person name="Lindell A.H."/>
            <person name="Harkins D.M."/>
            <person name="Baker-Austin C."/>
            <person name="Ravel J."/>
            <person name="Stepanauskas R."/>
        </authorList>
    </citation>
    <scope>NUCLEOTIDE SEQUENCE [LARGE SCALE GENOMIC DNA]</scope>
    <source>
        <strain>SMS-3-5 / SECEC</strain>
    </source>
</reference>
<name>RUVB_ECOSM</name>